<organism>
    <name type="scientific">Human herpesvirus 8 type P (isolate GK18)</name>
    <name type="common">HHV-8</name>
    <name type="synonym">Kaposi's sarcoma-associated herpesvirus</name>
    <dbReference type="NCBI Taxonomy" id="868565"/>
    <lineage>
        <taxon>Viruses</taxon>
        <taxon>Duplodnaviria</taxon>
        <taxon>Heunggongvirae</taxon>
        <taxon>Peploviricota</taxon>
        <taxon>Herviviricetes</taxon>
        <taxon>Herpesvirales</taxon>
        <taxon>Orthoherpesviridae</taxon>
        <taxon>Gammaherpesvirinae</taxon>
        <taxon>Rhadinovirus</taxon>
        <taxon>Rhadinovirus humangamma8</taxon>
        <taxon>Human herpesvirus 8</taxon>
    </lineage>
</organism>
<name>TRM3_HHV8P</name>
<proteinExistence type="inferred from homology"/>
<feature type="chain" id="PRO_0000423805" description="Tripartite terminase subunit 3">
    <location>
        <begin position="1"/>
        <end position="687"/>
    </location>
</feature>
<feature type="region of interest" description="Disordered" evidence="2">
    <location>
        <begin position="67"/>
        <end position="91"/>
    </location>
</feature>
<feature type="short sequence motif" description="Walker A motif" evidence="1">
    <location>
        <begin position="221"/>
        <end position="228"/>
    </location>
</feature>
<feature type="short sequence motif" description="Walker B motif" evidence="1">
    <location>
        <begin position="316"/>
        <end position="321"/>
    </location>
</feature>
<feature type="active site" description="For ATPase activity" evidence="1">
    <location>
        <position position="321"/>
    </location>
</feature>
<feature type="active site" description="For nuclease activity" evidence="1">
    <location>
        <position position="476"/>
    </location>
</feature>
<feature type="active site" description="For nuclease activity" evidence="1">
    <location>
        <position position="550"/>
    </location>
</feature>
<feature type="active site" description="For nuclease activity" evidence="1">
    <location>
        <position position="662"/>
    </location>
</feature>
<dbReference type="EC" id="3.1.-.-" evidence="1"/>
<dbReference type="EMBL" id="AF148805">
    <property type="protein sequence ID" value="ABD28880.1"/>
    <property type="molecule type" value="Genomic_DNA"/>
</dbReference>
<dbReference type="RefSeq" id="YP_001129382.1">
    <property type="nucleotide sequence ID" value="NC_009333.1"/>
</dbReference>
<dbReference type="SMR" id="F5HGB6"/>
<dbReference type="DNASU" id="4961443"/>
<dbReference type="GeneID" id="4961443"/>
<dbReference type="KEGG" id="vg:4961443"/>
<dbReference type="Proteomes" id="UP000000942">
    <property type="component" value="Segment"/>
</dbReference>
<dbReference type="GO" id="GO:0042025">
    <property type="term" value="C:host cell nucleus"/>
    <property type="evidence" value="ECO:0007669"/>
    <property type="project" value="UniProtKB-SubCell"/>
</dbReference>
<dbReference type="GO" id="GO:0003677">
    <property type="term" value="F:DNA binding"/>
    <property type="evidence" value="ECO:0007669"/>
    <property type="project" value="UniProtKB-KW"/>
</dbReference>
<dbReference type="GO" id="GO:0016787">
    <property type="term" value="F:hydrolase activity"/>
    <property type="evidence" value="ECO:0007669"/>
    <property type="project" value="UniProtKB-KW"/>
</dbReference>
<dbReference type="GO" id="GO:0051276">
    <property type="term" value="P:chromosome organization"/>
    <property type="evidence" value="ECO:0007669"/>
    <property type="project" value="InterPro"/>
</dbReference>
<dbReference type="Gene3D" id="3.30.420.320">
    <property type="match status" value="1"/>
</dbReference>
<dbReference type="Gene3D" id="3.40.50.300">
    <property type="entry name" value="P-loop containing nucleotide triphosphate hydrolases"/>
    <property type="match status" value="1"/>
</dbReference>
<dbReference type="HAMAP" id="MF_04013">
    <property type="entry name" value="HSV_TRM3"/>
    <property type="match status" value="1"/>
</dbReference>
<dbReference type="InterPro" id="IPR003498">
    <property type="entry name" value="DNA_pack_C"/>
</dbReference>
<dbReference type="InterPro" id="IPR038435">
    <property type="entry name" value="DNA_pack_C_sf"/>
</dbReference>
<dbReference type="InterPro" id="IPR003499">
    <property type="entry name" value="DNA_pack_N"/>
</dbReference>
<dbReference type="InterPro" id="IPR033663">
    <property type="entry name" value="HSV_TRM3"/>
</dbReference>
<dbReference type="InterPro" id="IPR027417">
    <property type="entry name" value="P-loop_NTPase"/>
</dbReference>
<dbReference type="Pfam" id="PF02499">
    <property type="entry name" value="DNA_pack_C"/>
    <property type="match status" value="1"/>
</dbReference>
<dbReference type="Pfam" id="PF02500">
    <property type="entry name" value="DNA_pack_N"/>
    <property type="match status" value="1"/>
</dbReference>
<reference key="1">
    <citation type="journal article" date="1999" name="J. Virol.">
        <title>Identification of a spliced gene from Kaposi's sarcoma-associated herpesvirus encoding a protein with similarities to latent membrane proteins 1 and 2A of Epstein-Barr virus.</title>
        <authorList>
            <person name="Glenn M."/>
            <person name="Rainbow L."/>
            <person name="Aurade F."/>
            <person name="Davison A."/>
            <person name="Schulz T.F."/>
        </authorList>
    </citation>
    <scope>NUCLEOTIDE SEQUENCE [LARGE SCALE GENOMIC DNA]</scope>
</reference>
<reference key="2">
    <citation type="journal article" date="2006" name="J. Gen. Virol.">
        <title>Kaposi's sarcoma-associated herpesvirus immune modulation: an overview.</title>
        <authorList>
            <person name="Rezaee S.A.R."/>
            <person name="Cunningham C."/>
            <person name="Davison A.J."/>
            <person name="Blackbourn D.J."/>
        </authorList>
    </citation>
    <scope>NUCLEOTIDE SEQUENCE [LARGE SCALE GENOMIC DNA]</scope>
</reference>
<comment type="function">
    <text evidence="1">Component of the molecular motor that translocates viral genomic DNA in empty capsid during DNA packaging. Forms a tripartite terminase complex together with TRM1 and TRM2 in the host cytoplasm. Once the complex reaches the host nucleus, it interacts with the capsid portal vertex. This portal forms a ring in which genomic DNA is translocated into the capsid. TRM3 carries an RNase H-like nuclease activity that plays an important role for the cleavage of concatemeric viral DNA into unit length genomes.</text>
</comment>
<comment type="subunit">
    <text evidence="1">Interacts with the terminase subunits TRM1 and TRM2. Interacts with portal protein.</text>
</comment>
<comment type="subcellular location">
    <subcellularLocation>
        <location evidence="1">Host nucleus</location>
    </subcellularLocation>
    <text evidence="1">Responsible for the nuclear localization of the two others subunits TRM1 and TRM2.</text>
</comment>
<comment type="similarity">
    <text evidence="1">Belongs to the herpesviridae TRM3 protein family.</text>
</comment>
<evidence type="ECO:0000255" key="1">
    <source>
        <dbReference type="HAMAP-Rule" id="MF_04013"/>
    </source>
</evidence>
<evidence type="ECO:0000256" key="2">
    <source>
        <dbReference type="SAM" id="MobiDB-lite"/>
    </source>
</evidence>
<organismHost>
    <name type="scientific">Homo sapiens</name>
    <name type="common">Human</name>
    <dbReference type="NCBI Taxonomy" id="9606"/>
</organismHost>
<accession>F5HGB6</accession>
<protein>
    <recommendedName>
        <fullName evidence="1">Tripartite terminase subunit 3</fullName>
        <ecNumber evidence="1">3.1.-.-</ecNumber>
    </recommendedName>
    <alternativeName>
        <fullName evidence="1">Terminase large subunit</fullName>
    </alternativeName>
</protein>
<keyword id="KW-0238">DNA-binding</keyword>
<keyword id="KW-1048">Host nucleus</keyword>
<keyword id="KW-0378">Hydrolase</keyword>
<keyword id="KW-1185">Reference proteome</keyword>
<keyword id="KW-0231">Viral genome packaging</keyword>
<keyword id="KW-1188">Viral release from host cell</keyword>
<gene>
    <name evidence="1" type="primary">TRM3</name>
    <name type="ordered locus">ORF29</name>
</gene>
<sequence length="687" mass="76529">MLLSRHRERLAANLQETAKDAGERWELSAPTFTRHCPKTARMAHPFIGVVHRINSYSSVLETYCTRHHPATPTSANPDVGTPRPSEDNVPAKPRLLESLSTYLQMRCVREDAHVSTADQLVEYQAARKTHDSLHACSVYRELQAFLVNLSSFLNGCYVPGVHWLEPFQQQLVMHTFFFLVSIKAPQKTHQLFGLFKQYFGLFETPNSVLQTFKQKASVFLIPRRHGKTWIVVAIISMLLASVENINIGYVAHQKHVANSVFAEIIKTLCRWFPPKNLNIKKENGTIIYTRPGGRSSSLMCATCFNKNSIRGQTFNLLYVDEANFIKKDALPAILGFMLQKDAKLIFISSVNSSDRSTSFLLNLRNAQEKMLNVVSYVCADHREDFHLQDALVSCPCYRLHIPTYITIDESIKTTTNLFMEGAFDTELMGEGAASSNATLYRVVGDAALTQFDMCRVDTTAQQVQKCLGKQLFVYIDPAYTNNTEASGTGVGAVVTSTQTPTRSLILGMEHFFLRDLTGAAAYEIASCACTMIKAIAVLHPTIERVNAAVEGNSSQDSGVAIATVLNEICPLPIHFLHYTDKSSALQWPIYMLGGEKSSAFETFIYALNSGTLSASQTVVSNTIKISFDPVTYLVEQVRAIKCVPLRDGGQSYSAKQKHMSDDLLVAVVMAHFMATDDRHMYKPISPQ</sequence>